<protein>
    <recommendedName>
        <fullName evidence="1">UPF0597 protein CTC_02309</fullName>
    </recommendedName>
</protein>
<comment type="similarity">
    <text evidence="1">Belongs to the UPF0597 family.</text>
</comment>
<comment type="sequence caution" evidence="2">
    <conflict type="erroneous initiation">
        <sequence resource="EMBL-CDS" id="AAO36786"/>
    </conflict>
</comment>
<name>Y2309_CLOTE</name>
<organism>
    <name type="scientific">Clostridium tetani (strain Massachusetts / E88)</name>
    <dbReference type="NCBI Taxonomy" id="212717"/>
    <lineage>
        <taxon>Bacteria</taxon>
        <taxon>Bacillati</taxon>
        <taxon>Bacillota</taxon>
        <taxon>Clostridia</taxon>
        <taxon>Eubacteriales</taxon>
        <taxon>Clostridiaceae</taxon>
        <taxon>Clostridium</taxon>
    </lineage>
</organism>
<gene>
    <name type="ordered locus">CTC_02309</name>
</gene>
<keyword id="KW-1185">Reference proteome</keyword>
<evidence type="ECO:0000255" key="1">
    <source>
        <dbReference type="HAMAP-Rule" id="MF_01845"/>
    </source>
</evidence>
<evidence type="ECO:0000305" key="2"/>
<sequence>MNREGLLIEILKNQVVPALGCTEPIAVAYGVSKAKEILGEEVEHMEVNVDRSIFKNGKEVGIPGTDKKGILIAAALSIIVGKSEYSLQVLKDLTNEDIPKALELIQNNVVKLNLKEGVKGLYIEIIASGNKNKSRVVIKNNHLNIVLLEKNGMCIEEKSEEKSSVSVNLRDEIRNFTIKDLKDFVDNIDIEDIYFINEGIAMNKRIAKEGLDNKLGLGLGDLLKSEENNVIEYAKAVTSGACEARMSGYPLPVMSSAGSGNHGLVAILPIASIGEKLEKNEEKVIRSVALSHLVTIYIKSYTGALSPVCGCGVAAGVGASAGLCYLMDGTLEQIYGAIKNMIAGISGMICDGAKLGCAYKLCISVSSSIDAARMALKNIFVPSNDGILDETAEKSIQNLGKVSTDGMSCTDEVILEVMLDRCN</sequence>
<proteinExistence type="inferred from homology"/>
<dbReference type="EMBL" id="AE015927">
    <property type="protein sequence ID" value="AAO36786.1"/>
    <property type="status" value="ALT_INIT"/>
    <property type="molecule type" value="Genomic_DNA"/>
</dbReference>
<dbReference type="RefSeq" id="WP_035108936.1">
    <property type="nucleotide sequence ID" value="NC_004557.1"/>
</dbReference>
<dbReference type="STRING" id="212717.CTC_02309"/>
<dbReference type="GeneID" id="24253035"/>
<dbReference type="KEGG" id="ctc:CTC_02309"/>
<dbReference type="HOGENOM" id="CLU_051840_0_0_9"/>
<dbReference type="OrthoDB" id="41906at2"/>
<dbReference type="Proteomes" id="UP000001412">
    <property type="component" value="Chromosome"/>
</dbReference>
<dbReference type="GO" id="GO:0080146">
    <property type="term" value="F:L-cysteine desulfhydrase activity"/>
    <property type="evidence" value="ECO:0007669"/>
    <property type="project" value="TreeGrafter"/>
</dbReference>
<dbReference type="GO" id="GO:0019450">
    <property type="term" value="P:L-cysteine catabolic process to pyruvate"/>
    <property type="evidence" value="ECO:0007669"/>
    <property type="project" value="TreeGrafter"/>
</dbReference>
<dbReference type="HAMAP" id="MF_01845">
    <property type="entry name" value="UPF0597"/>
    <property type="match status" value="1"/>
</dbReference>
<dbReference type="InterPro" id="IPR005130">
    <property type="entry name" value="Ser_deHydtase-like_asu"/>
</dbReference>
<dbReference type="InterPro" id="IPR021144">
    <property type="entry name" value="UPF0597"/>
</dbReference>
<dbReference type="PANTHER" id="PTHR30501">
    <property type="entry name" value="UPF0597 PROTEIN YHAM"/>
    <property type="match status" value="1"/>
</dbReference>
<dbReference type="PANTHER" id="PTHR30501:SF2">
    <property type="entry name" value="UPF0597 PROTEIN YHAM"/>
    <property type="match status" value="1"/>
</dbReference>
<dbReference type="Pfam" id="PF03313">
    <property type="entry name" value="SDH_alpha"/>
    <property type="match status" value="1"/>
</dbReference>
<dbReference type="PIRSF" id="PIRSF006054">
    <property type="entry name" value="UCP006054"/>
    <property type="match status" value="1"/>
</dbReference>
<feature type="chain" id="PRO_0000339810" description="UPF0597 protein CTC_02309">
    <location>
        <begin position="1"/>
        <end position="423"/>
    </location>
</feature>
<accession>Q891Q9</accession>
<reference key="1">
    <citation type="journal article" date="2003" name="Proc. Natl. Acad. Sci. U.S.A.">
        <title>The genome sequence of Clostridium tetani, the causative agent of tetanus disease.</title>
        <authorList>
            <person name="Brueggemann H."/>
            <person name="Baeumer S."/>
            <person name="Fricke W.F."/>
            <person name="Wiezer A."/>
            <person name="Liesegang H."/>
            <person name="Decker I."/>
            <person name="Herzberg C."/>
            <person name="Martinez-Arias R."/>
            <person name="Merkl R."/>
            <person name="Henne A."/>
            <person name="Gottschalk G."/>
        </authorList>
    </citation>
    <scope>NUCLEOTIDE SEQUENCE [LARGE SCALE GENOMIC DNA]</scope>
    <source>
        <strain>Massachusetts / E88</strain>
    </source>
</reference>